<sequence>MAEWSGEYISPYAEHGKKSEQVKKITVSIPLKVLKILTDERTRRQVNNLRHATNSELLCEAFLHAFTGQPLPDDADLRKERSDEIPEAAKEIMREMGINPETWEY</sequence>
<name>METJ_SHIBS</name>
<feature type="chain" id="PRO_1000046496" description="Met repressor">
    <location>
        <begin position="1"/>
        <end position="105"/>
    </location>
</feature>
<gene>
    <name evidence="1" type="primary">metJ</name>
    <name type="ordered locus">SBO_3958</name>
</gene>
<proteinExistence type="inferred from homology"/>
<dbReference type="EMBL" id="CP000036">
    <property type="protein sequence ID" value="ABB68409.1"/>
    <property type="molecule type" value="Genomic_DNA"/>
</dbReference>
<dbReference type="RefSeq" id="WP_000852812.1">
    <property type="nucleotide sequence ID" value="NC_007613.1"/>
</dbReference>
<dbReference type="SMR" id="Q31U49"/>
<dbReference type="GeneID" id="93777954"/>
<dbReference type="KEGG" id="sbo:SBO_3958"/>
<dbReference type="HOGENOM" id="CLU_142318_0_0_6"/>
<dbReference type="Proteomes" id="UP000007067">
    <property type="component" value="Chromosome"/>
</dbReference>
<dbReference type="GO" id="GO:0005737">
    <property type="term" value="C:cytoplasm"/>
    <property type="evidence" value="ECO:0007669"/>
    <property type="project" value="UniProtKB-SubCell"/>
</dbReference>
<dbReference type="GO" id="GO:0003677">
    <property type="term" value="F:DNA binding"/>
    <property type="evidence" value="ECO:0007669"/>
    <property type="project" value="UniProtKB-KW"/>
</dbReference>
<dbReference type="GO" id="GO:0003700">
    <property type="term" value="F:DNA-binding transcription factor activity"/>
    <property type="evidence" value="ECO:0007669"/>
    <property type="project" value="InterPro"/>
</dbReference>
<dbReference type="GO" id="GO:0009086">
    <property type="term" value="P:methionine biosynthetic process"/>
    <property type="evidence" value="ECO:0007669"/>
    <property type="project" value="UniProtKB-UniRule"/>
</dbReference>
<dbReference type="GO" id="GO:0045892">
    <property type="term" value="P:negative regulation of DNA-templated transcription"/>
    <property type="evidence" value="ECO:0007669"/>
    <property type="project" value="UniProtKB-UniRule"/>
</dbReference>
<dbReference type="CDD" id="cd00490">
    <property type="entry name" value="Met_repressor_MetJ"/>
    <property type="match status" value="1"/>
</dbReference>
<dbReference type="FunFam" id="1.10.140.10:FF:000001">
    <property type="entry name" value="Met repressor"/>
    <property type="match status" value="1"/>
</dbReference>
<dbReference type="Gene3D" id="1.10.140.10">
    <property type="entry name" value="MET Apo-Repressor, subunit A"/>
    <property type="match status" value="1"/>
</dbReference>
<dbReference type="HAMAP" id="MF_00744">
    <property type="entry name" value="MetJ"/>
    <property type="match status" value="1"/>
</dbReference>
<dbReference type="InterPro" id="IPR002084">
    <property type="entry name" value="Met_repressor_MetJ"/>
</dbReference>
<dbReference type="InterPro" id="IPR023453">
    <property type="entry name" value="Met_repressor_MetJ_dom_sf"/>
</dbReference>
<dbReference type="InterPro" id="IPR010985">
    <property type="entry name" value="Ribbon_hlx_hlx"/>
</dbReference>
<dbReference type="NCBIfam" id="NF003622">
    <property type="entry name" value="PRK05264.1"/>
    <property type="match status" value="1"/>
</dbReference>
<dbReference type="Pfam" id="PF01340">
    <property type="entry name" value="MetJ"/>
    <property type="match status" value="1"/>
</dbReference>
<dbReference type="SUPFAM" id="SSF47598">
    <property type="entry name" value="Ribbon-helix-helix"/>
    <property type="match status" value="1"/>
</dbReference>
<comment type="function">
    <text evidence="1">This regulatory protein, when combined with SAM (S-adenosylmethionine) represses the expression of the methionine regulon and of enzymes involved in SAM synthesis.</text>
</comment>
<comment type="subunit">
    <text evidence="1">Homodimer.</text>
</comment>
<comment type="subcellular location">
    <subcellularLocation>
        <location evidence="1">Cytoplasm</location>
    </subcellularLocation>
</comment>
<comment type="domain">
    <text>Does not bind DNA by a helix-turn-helix motif.</text>
</comment>
<comment type="similarity">
    <text evidence="1">Belongs to the MetJ family.</text>
</comment>
<reference key="1">
    <citation type="journal article" date="2005" name="Nucleic Acids Res.">
        <title>Genome dynamics and diversity of Shigella species, the etiologic agents of bacillary dysentery.</title>
        <authorList>
            <person name="Yang F."/>
            <person name="Yang J."/>
            <person name="Zhang X."/>
            <person name="Chen L."/>
            <person name="Jiang Y."/>
            <person name="Yan Y."/>
            <person name="Tang X."/>
            <person name="Wang J."/>
            <person name="Xiong Z."/>
            <person name="Dong J."/>
            <person name="Xue Y."/>
            <person name="Zhu Y."/>
            <person name="Xu X."/>
            <person name="Sun L."/>
            <person name="Chen S."/>
            <person name="Nie H."/>
            <person name="Peng J."/>
            <person name="Xu J."/>
            <person name="Wang Y."/>
            <person name="Yuan Z."/>
            <person name="Wen Y."/>
            <person name="Yao Z."/>
            <person name="Shen Y."/>
            <person name="Qiang B."/>
            <person name="Hou Y."/>
            <person name="Yu J."/>
            <person name="Jin Q."/>
        </authorList>
    </citation>
    <scope>NUCLEOTIDE SEQUENCE [LARGE SCALE GENOMIC DNA]</scope>
    <source>
        <strain>Sb227</strain>
    </source>
</reference>
<protein>
    <recommendedName>
        <fullName evidence="1">Met repressor</fullName>
    </recommendedName>
    <alternativeName>
        <fullName evidence="1">Met regulon regulatory protein MetJ</fullName>
    </alternativeName>
</protein>
<keyword id="KW-0028">Amino-acid biosynthesis</keyword>
<keyword id="KW-0963">Cytoplasm</keyword>
<keyword id="KW-0238">DNA-binding</keyword>
<keyword id="KW-0486">Methionine biosynthesis</keyword>
<keyword id="KW-0678">Repressor</keyword>
<keyword id="KW-0804">Transcription</keyword>
<keyword id="KW-0805">Transcription regulation</keyword>
<accession>Q31U49</accession>
<evidence type="ECO:0000255" key="1">
    <source>
        <dbReference type="HAMAP-Rule" id="MF_00744"/>
    </source>
</evidence>
<organism>
    <name type="scientific">Shigella boydii serotype 4 (strain Sb227)</name>
    <dbReference type="NCBI Taxonomy" id="300268"/>
    <lineage>
        <taxon>Bacteria</taxon>
        <taxon>Pseudomonadati</taxon>
        <taxon>Pseudomonadota</taxon>
        <taxon>Gammaproteobacteria</taxon>
        <taxon>Enterobacterales</taxon>
        <taxon>Enterobacteriaceae</taxon>
        <taxon>Shigella</taxon>
    </lineage>
</organism>